<proteinExistence type="evidence at protein level"/>
<keyword id="KW-0597">Phosphoprotein</keyword>
<keyword id="KW-1185">Reference proteome</keyword>
<protein>
    <recommendedName>
        <fullName>Brix domain-containing protein C1B9.03c</fullName>
    </recommendedName>
</protein>
<evidence type="ECO:0000255" key="1">
    <source>
        <dbReference type="PROSITE-ProRule" id="PRU00034"/>
    </source>
</evidence>
<evidence type="ECO:0000256" key="2">
    <source>
        <dbReference type="SAM" id="MobiDB-lite"/>
    </source>
</evidence>
<evidence type="ECO:0000269" key="3">
    <source>
    </source>
</evidence>
<gene>
    <name type="ORF">SPAC1B9.03c</name>
    <name type="ORF">SPAC6B12.01</name>
</gene>
<accession>O14206</accession>
<accession>Q9UTF2</accession>
<organism>
    <name type="scientific">Schizosaccharomyces pombe (strain 972 / ATCC 24843)</name>
    <name type="common">Fission yeast</name>
    <dbReference type="NCBI Taxonomy" id="284812"/>
    <lineage>
        <taxon>Eukaryota</taxon>
        <taxon>Fungi</taxon>
        <taxon>Dikarya</taxon>
        <taxon>Ascomycota</taxon>
        <taxon>Taphrinomycotina</taxon>
        <taxon>Schizosaccharomycetes</taxon>
        <taxon>Schizosaccharomycetales</taxon>
        <taxon>Schizosaccharomycetaceae</taxon>
        <taxon>Schizosaccharomyces</taxon>
    </lineage>
</organism>
<reference key="1">
    <citation type="journal article" date="2002" name="Nature">
        <title>The genome sequence of Schizosaccharomyces pombe.</title>
        <authorList>
            <person name="Wood V."/>
            <person name="Gwilliam R."/>
            <person name="Rajandream M.A."/>
            <person name="Lyne M.H."/>
            <person name="Lyne R."/>
            <person name="Stewart A."/>
            <person name="Sgouros J.G."/>
            <person name="Peat N."/>
            <person name="Hayles J."/>
            <person name="Baker S.G."/>
            <person name="Basham D."/>
            <person name="Bowman S."/>
            <person name="Brooks K."/>
            <person name="Brown D."/>
            <person name="Brown S."/>
            <person name="Chillingworth T."/>
            <person name="Churcher C.M."/>
            <person name="Collins M."/>
            <person name="Connor R."/>
            <person name="Cronin A."/>
            <person name="Davis P."/>
            <person name="Feltwell T."/>
            <person name="Fraser A."/>
            <person name="Gentles S."/>
            <person name="Goble A."/>
            <person name="Hamlin N."/>
            <person name="Harris D.E."/>
            <person name="Hidalgo J."/>
            <person name="Hodgson G."/>
            <person name="Holroyd S."/>
            <person name="Hornsby T."/>
            <person name="Howarth S."/>
            <person name="Huckle E.J."/>
            <person name="Hunt S."/>
            <person name="Jagels K."/>
            <person name="James K.D."/>
            <person name="Jones L."/>
            <person name="Jones M."/>
            <person name="Leather S."/>
            <person name="McDonald S."/>
            <person name="McLean J."/>
            <person name="Mooney P."/>
            <person name="Moule S."/>
            <person name="Mungall K.L."/>
            <person name="Murphy L.D."/>
            <person name="Niblett D."/>
            <person name="Odell C."/>
            <person name="Oliver K."/>
            <person name="O'Neil S."/>
            <person name="Pearson D."/>
            <person name="Quail M.A."/>
            <person name="Rabbinowitsch E."/>
            <person name="Rutherford K.M."/>
            <person name="Rutter S."/>
            <person name="Saunders D."/>
            <person name="Seeger K."/>
            <person name="Sharp S."/>
            <person name="Skelton J."/>
            <person name="Simmonds M.N."/>
            <person name="Squares R."/>
            <person name="Squares S."/>
            <person name="Stevens K."/>
            <person name="Taylor K."/>
            <person name="Taylor R.G."/>
            <person name="Tivey A."/>
            <person name="Walsh S.V."/>
            <person name="Warren T."/>
            <person name="Whitehead S."/>
            <person name="Woodward J.R."/>
            <person name="Volckaert G."/>
            <person name="Aert R."/>
            <person name="Robben J."/>
            <person name="Grymonprez B."/>
            <person name="Weltjens I."/>
            <person name="Vanstreels E."/>
            <person name="Rieger M."/>
            <person name="Schaefer M."/>
            <person name="Mueller-Auer S."/>
            <person name="Gabel C."/>
            <person name="Fuchs M."/>
            <person name="Duesterhoeft A."/>
            <person name="Fritzc C."/>
            <person name="Holzer E."/>
            <person name="Moestl D."/>
            <person name="Hilbert H."/>
            <person name="Borzym K."/>
            <person name="Langer I."/>
            <person name="Beck A."/>
            <person name="Lehrach H."/>
            <person name="Reinhardt R."/>
            <person name="Pohl T.M."/>
            <person name="Eger P."/>
            <person name="Zimmermann W."/>
            <person name="Wedler H."/>
            <person name="Wambutt R."/>
            <person name="Purnelle B."/>
            <person name="Goffeau A."/>
            <person name="Cadieu E."/>
            <person name="Dreano S."/>
            <person name="Gloux S."/>
            <person name="Lelaure V."/>
            <person name="Mottier S."/>
            <person name="Galibert F."/>
            <person name="Aves S.J."/>
            <person name="Xiang Z."/>
            <person name="Hunt C."/>
            <person name="Moore K."/>
            <person name="Hurst S.M."/>
            <person name="Lucas M."/>
            <person name="Rochet M."/>
            <person name="Gaillardin C."/>
            <person name="Tallada V.A."/>
            <person name="Garzon A."/>
            <person name="Thode G."/>
            <person name="Daga R.R."/>
            <person name="Cruzado L."/>
            <person name="Jimenez J."/>
            <person name="Sanchez M."/>
            <person name="del Rey F."/>
            <person name="Benito J."/>
            <person name="Dominguez A."/>
            <person name="Revuelta J.L."/>
            <person name="Moreno S."/>
            <person name="Armstrong J."/>
            <person name="Forsburg S.L."/>
            <person name="Cerutti L."/>
            <person name="Lowe T."/>
            <person name="McCombie W.R."/>
            <person name="Paulsen I."/>
            <person name="Potashkin J."/>
            <person name="Shpakovski G.V."/>
            <person name="Ussery D."/>
            <person name="Barrell B.G."/>
            <person name="Nurse P."/>
        </authorList>
    </citation>
    <scope>NUCLEOTIDE SEQUENCE [LARGE SCALE GENOMIC DNA]</scope>
    <source>
        <strain>972 / ATCC 24843</strain>
    </source>
</reference>
<reference key="2">
    <citation type="journal article" date="2008" name="J. Proteome Res.">
        <title>Phosphoproteome analysis of fission yeast.</title>
        <authorList>
            <person name="Wilson-Grady J.T."/>
            <person name="Villen J."/>
            <person name="Gygi S.P."/>
        </authorList>
    </citation>
    <scope>PHOSPHORYLATION [LARGE SCALE ANALYSIS] AT SER-377</scope>
    <scope>IDENTIFICATION BY MASS SPECTROMETRY</scope>
</reference>
<feature type="chain" id="PRO_0000120262" description="Brix domain-containing protein C1B9.03c">
    <location>
        <begin position="1"/>
        <end position="389"/>
    </location>
</feature>
<feature type="domain" description="Brix" evidence="1">
    <location>
        <begin position="28"/>
        <end position="309"/>
    </location>
</feature>
<feature type="region of interest" description="Disordered" evidence="2">
    <location>
        <begin position="323"/>
        <end position="389"/>
    </location>
</feature>
<feature type="compositionally biased region" description="Basic and acidic residues" evidence="2">
    <location>
        <begin position="323"/>
        <end position="350"/>
    </location>
</feature>
<feature type="compositionally biased region" description="Basic residues" evidence="2">
    <location>
        <begin position="351"/>
        <end position="362"/>
    </location>
</feature>
<feature type="compositionally biased region" description="Polar residues" evidence="2">
    <location>
        <begin position="379"/>
        <end position="389"/>
    </location>
</feature>
<feature type="modified residue" description="Phosphoserine" evidence="3">
    <location>
        <position position="377"/>
    </location>
</feature>
<name>YDD3_SCHPO</name>
<sequence length="389" mass="44262">MGGIGKKRVKKRTHLKADPIQEAAIPKSMVIRSGASEVGRSLSLLTRDLRHMMEPHTAIRLKERKANKIKDYLTMAGPLGVTHLLVLSRTDNNANLRIIRAPRGPSLHFRIHEYMLNKDVRRLQKNPKSPTTEFLTPPLLVMNHFNQNSSKDSPHEALLTTTFQNMFPPISVQHTNINSVKRVLLLNRRDDGYIDLRHFIISTKPVGISRPIRHLLKGEKKDSDIPDLHNVRDISDYVLHGDGISGAASDSEIEEDATVEIDRPVPTKTEENLLSASQLLKPKQQAIKLIEIGPRMTLELIKITEDAMGGKVLYHSHVHKSKEEIKQQDNFHEQSRALKEKRKKEQDENVRRKRENKKRRKDQKKEGITSSNKNDDSGNEGSSAYSDTE</sequence>
<dbReference type="EMBL" id="CU329670">
    <property type="protein sequence ID" value="CAB53054.2"/>
    <property type="molecule type" value="Genomic_DNA"/>
</dbReference>
<dbReference type="PIR" id="T38041">
    <property type="entry name" value="T38041"/>
</dbReference>
<dbReference type="PIR" id="T39008">
    <property type="entry name" value="T39008"/>
</dbReference>
<dbReference type="RefSeq" id="NP_593755.2">
    <property type="nucleotide sequence ID" value="NM_001019185.3"/>
</dbReference>
<dbReference type="SMR" id="O14206"/>
<dbReference type="BioGRID" id="279064">
    <property type="interactions" value="2"/>
</dbReference>
<dbReference type="FunCoup" id="O14206">
    <property type="interactions" value="447"/>
</dbReference>
<dbReference type="STRING" id="284812.O14206"/>
<dbReference type="iPTMnet" id="O14206"/>
<dbReference type="PaxDb" id="4896-SPAC1B9.03c.1"/>
<dbReference type="EnsemblFungi" id="SPAC1B9.03c.1">
    <property type="protein sequence ID" value="SPAC1B9.03c.1:pep"/>
    <property type="gene ID" value="SPAC1B9.03c"/>
</dbReference>
<dbReference type="KEGG" id="spo:2542610"/>
<dbReference type="PomBase" id="SPAC1B9.03c"/>
<dbReference type="VEuPathDB" id="FungiDB:SPAC1B9.03c"/>
<dbReference type="eggNOG" id="KOG2963">
    <property type="taxonomic scope" value="Eukaryota"/>
</dbReference>
<dbReference type="HOGENOM" id="CLU_026936_2_0_1"/>
<dbReference type="InParanoid" id="O14206"/>
<dbReference type="OMA" id="KDYTVMT"/>
<dbReference type="PhylomeDB" id="O14206"/>
<dbReference type="PRO" id="PR:O14206"/>
<dbReference type="Proteomes" id="UP000002485">
    <property type="component" value="Chromosome I"/>
</dbReference>
<dbReference type="GO" id="GO:0005730">
    <property type="term" value="C:nucleolus"/>
    <property type="evidence" value="ECO:0007005"/>
    <property type="project" value="PomBase"/>
</dbReference>
<dbReference type="GO" id="GO:0030687">
    <property type="term" value="C:preribosome, large subunit precursor"/>
    <property type="evidence" value="ECO:0000318"/>
    <property type="project" value="GO_Central"/>
</dbReference>
<dbReference type="GO" id="GO:0019843">
    <property type="term" value="F:rRNA binding"/>
    <property type="evidence" value="ECO:0000318"/>
    <property type="project" value="GO_Central"/>
</dbReference>
<dbReference type="GO" id="GO:0180023">
    <property type="term" value="P:cytosolic large ribosomal subunit assembly"/>
    <property type="evidence" value="ECO:0000266"/>
    <property type="project" value="PomBase"/>
</dbReference>
<dbReference type="GO" id="GO:0000463">
    <property type="term" value="P:maturation of LSU-rRNA from tricistronic rRNA transcript (SSU-rRNA, 5.8S rRNA, LSU-rRNA)"/>
    <property type="evidence" value="ECO:0000318"/>
    <property type="project" value="GO_Central"/>
</dbReference>
<dbReference type="InterPro" id="IPR007109">
    <property type="entry name" value="Brix"/>
</dbReference>
<dbReference type="InterPro" id="IPR045112">
    <property type="entry name" value="PPAN-like"/>
</dbReference>
<dbReference type="PANTHER" id="PTHR12661">
    <property type="entry name" value="PETER PAN-RELATED"/>
    <property type="match status" value="1"/>
</dbReference>
<dbReference type="PANTHER" id="PTHR12661:SF5">
    <property type="entry name" value="SUPPRESSOR OF SWI4 1 HOMOLOG"/>
    <property type="match status" value="1"/>
</dbReference>
<dbReference type="Pfam" id="PF04427">
    <property type="entry name" value="Brix"/>
    <property type="match status" value="1"/>
</dbReference>
<dbReference type="SMART" id="SM00879">
    <property type="entry name" value="Brix"/>
    <property type="match status" value="1"/>
</dbReference>
<dbReference type="PROSITE" id="PS50833">
    <property type="entry name" value="BRIX"/>
    <property type="match status" value="1"/>
</dbReference>